<organism>
    <name type="scientific">Nitrobacter winogradskyi (strain ATCC 25391 / DSM 10237 / CIP 104748 / NCIMB 11846 / Nb-255)</name>
    <dbReference type="NCBI Taxonomy" id="323098"/>
    <lineage>
        <taxon>Bacteria</taxon>
        <taxon>Pseudomonadati</taxon>
        <taxon>Pseudomonadota</taxon>
        <taxon>Alphaproteobacteria</taxon>
        <taxon>Hyphomicrobiales</taxon>
        <taxon>Nitrobacteraceae</taxon>
        <taxon>Nitrobacter</taxon>
    </lineage>
</organism>
<accession>Q3SR23</accession>
<proteinExistence type="inferred from homology"/>
<comment type="function">
    <text evidence="1">Catalyzes the transfer of an acyl group from acyl-phosphate (acyl-PO(4)) to glycerol-3-phosphate (G3P) to form lysophosphatidic acid (LPA). This enzyme utilizes acyl-phosphate as fatty acyl donor, but not acyl-CoA or acyl-ACP.</text>
</comment>
<comment type="catalytic activity">
    <reaction evidence="1">
        <text>an acyl phosphate + sn-glycerol 3-phosphate = a 1-acyl-sn-glycero-3-phosphate + phosphate</text>
        <dbReference type="Rhea" id="RHEA:34075"/>
        <dbReference type="ChEBI" id="CHEBI:43474"/>
        <dbReference type="ChEBI" id="CHEBI:57597"/>
        <dbReference type="ChEBI" id="CHEBI:57970"/>
        <dbReference type="ChEBI" id="CHEBI:59918"/>
        <dbReference type="EC" id="2.3.1.275"/>
    </reaction>
</comment>
<comment type="pathway">
    <text evidence="1">Lipid metabolism; phospholipid metabolism.</text>
</comment>
<comment type="subunit">
    <text evidence="1">Probably interacts with PlsX.</text>
</comment>
<comment type="subcellular location">
    <subcellularLocation>
        <location evidence="1">Cell inner membrane</location>
        <topology evidence="1">Multi-pass membrane protein</topology>
    </subcellularLocation>
</comment>
<comment type="similarity">
    <text evidence="1">Belongs to the PlsY family.</text>
</comment>
<reference key="1">
    <citation type="journal article" date="2006" name="Appl. Environ. Microbiol.">
        <title>Genome sequence of the chemolithoautotrophic nitrite-oxidizing bacterium Nitrobacter winogradskyi Nb-255.</title>
        <authorList>
            <person name="Starkenburg S.R."/>
            <person name="Chain P.S.G."/>
            <person name="Sayavedra-Soto L.A."/>
            <person name="Hauser L."/>
            <person name="Land M.L."/>
            <person name="Larimer F.W."/>
            <person name="Malfatti S.A."/>
            <person name="Klotz M.G."/>
            <person name="Bottomley P.J."/>
            <person name="Arp D.J."/>
            <person name="Hickey W.J."/>
        </authorList>
    </citation>
    <scope>NUCLEOTIDE SEQUENCE [LARGE SCALE GENOMIC DNA]</scope>
    <source>
        <strain>ATCC 25391 / DSM 10237 / CIP 104748 / NCIMB 11846 / Nb-255</strain>
    </source>
</reference>
<dbReference type="EC" id="2.3.1.275" evidence="1"/>
<dbReference type="EMBL" id="CP000115">
    <property type="protein sequence ID" value="ABA05268.1"/>
    <property type="molecule type" value="Genomic_DNA"/>
</dbReference>
<dbReference type="RefSeq" id="WP_011315254.1">
    <property type="nucleotide sequence ID" value="NC_007406.1"/>
</dbReference>
<dbReference type="SMR" id="Q3SR23"/>
<dbReference type="STRING" id="323098.Nwi_2009"/>
<dbReference type="KEGG" id="nwi:Nwi_2009"/>
<dbReference type="eggNOG" id="COG0344">
    <property type="taxonomic scope" value="Bacteria"/>
</dbReference>
<dbReference type="HOGENOM" id="CLU_081254_1_0_5"/>
<dbReference type="OrthoDB" id="9777124at2"/>
<dbReference type="UniPathway" id="UPA00085"/>
<dbReference type="Proteomes" id="UP000002531">
    <property type="component" value="Chromosome"/>
</dbReference>
<dbReference type="GO" id="GO:0005886">
    <property type="term" value="C:plasma membrane"/>
    <property type="evidence" value="ECO:0007669"/>
    <property type="project" value="UniProtKB-SubCell"/>
</dbReference>
<dbReference type="GO" id="GO:0043772">
    <property type="term" value="F:acyl-phosphate glycerol-3-phosphate acyltransferase activity"/>
    <property type="evidence" value="ECO:0007669"/>
    <property type="project" value="UniProtKB-UniRule"/>
</dbReference>
<dbReference type="GO" id="GO:0008654">
    <property type="term" value="P:phospholipid biosynthetic process"/>
    <property type="evidence" value="ECO:0007669"/>
    <property type="project" value="UniProtKB-UniRule"/>
</dbReference>
<dbReference type="HAMAP" id="MF_01043">
    <property type="entry name" value="PlsY"/>
    <property type="match status" value="1"/>
</dbReference>
<dbReference type="InterPro" id="IPR003811">
    <property type="entry name" value="G3P_acylTferase_PlsY"/>
</dbReference>
<dbReference type="NCBIfam" id="TIGR00023">
    <property type="entry name" value="glycerol-3-phosphate 1-O-acyltransferase PlsY"/>
    <property type="match status" value="1"/>
</dbReference>
<dbReference type="PANTHER" id="PTHR30309:SF0">
    <property type="entry name" value="GLYCEROL-3-PHOSPHATE ACYLTRANSFERASE-RELATED"/>
    <property type="match status" value="1"/>
</dbReference>
<dbReference type="PANTHER" id="PTHR30309">
    <property type="entry name" value="INNER MEMBRANE PROTEIN YGIH"/>
    <property type="match status" value="1"/>
</dbReference>
<dbReference type="Pfam" id="PF02660">
    <property type="entry name" value="G3P_acyltransf"/>
    <property type="match status" value="1"/>
</dbReference>
<dbReference type="SMART" id="SM01207">
    <property type="entry name" value="G3P_acyltransf"/>
    <property type="match status" value="1"/>
</dbReference>
<sequence length="196" mass="20708">MFPNGLIAFAFGYLLGSIPFGMILTRIAGTQDLRSIGSGNIGATNVLRTGRRGLAAATLLGDMLKGTAAVVIALLLSGPGAAMAATLGAFLGHLFPVWLKFRGGKGVATYIGVLLGLFWPAALAFCAIWLLVAFTTRYSSLSALLASLTTPLLLWGFGHPQFALLFAVLTVLLWFKHRENIRRLFAGSEGRIGAKA</sequence>
<keyword id="KW-0997">Cell inner membrane</keyword>
<keyword id="KW-1003">Cell membrane</keyword>
<keyword id="KW-0444">Lipid biosynthesis</keyword>
<keyword id="KW-0443">Lipid metabolism</keyword>
<keyword id="KW-0472">Membrane</keyword>
<keyword id="KW-0594">Phospholipid biosynthesis</keyword>
<keyword id="KW-1208">Phospholipid metabolism</keyword>
<keyword id="KW-1185">Reference proteome</keyword>
<keyword id="KW-0808">Transferase</keyword>
<keyword id="KW-0812">Transmembrane</keyword>
<keyword id="KW-1133">Transmembrane helix</keyword>
<evidence type="ECO:0000255" key="1">
    <source>
        <dbReference type="HAMAP-Rule" id="MF_01043"/>
    </source>
</evidence>
<gene>
    <name evidence="1" type="primary">plsY</name>
    <name type="ordered locus">Nwi_2009</name>
</gene>
<protein>
    <recommendedName>
        <fullName evidence="1">Glycerol-3-phosphate acyltransferase</fullName>
    </recommendedName>
    <alternativeName>
        <fullName evidence="1">Acyl-PO4 G3P acyltransferase</fullName>
    </alternativeName>
    <alternativeName>
        <fullName evidence="1">Acyl-phosphate--glycerol-3-phosphate acyltransferase</fullName>
    </alternativeName>
    <alternativeName>
        <fullName evidence="1">G3P acyltransferase</fullName>
        <shortName evidence="1">GPAT</shortName>
        <ecNumber evidence="1">2.3.1.275</ecNumber>
    </alternativeName>
    <alternativeName>
        <fullName evidence="1">Lysophosphatidic acid synthase</fullName>
        <shortName evidence="1">LPA synthase</shortName>
    </alternativeName>
</protein>
<feature type="chain" id="PRO_0000188412" description="Glycerol-3-phosphate acyltransferase">
    <location>
        <begin position="1"/>
        <end position="196"/>
    </location>
</feature>
<feature type="transmembrane region" description="Helical" evidence="1">
    <location>
        <begin position="5"/>
        <end position="25"/>
    </location>
</feature>
<feature type="transmembrane region" description="Helical" evidence="1">
    <location>
        <begin position="70"/>
        <end position="90"/>
    </location>
</feature>
<feature type="transmembrane region" description="Helical" evidence="1">
    <location>
        <begin position="111"/>
        <end position="131"/>
    </location>
</feature>
<feature type="transmembrane region" description="Helical" evidence="1">
    <location>
        <begin position="152"/>
        <end position="172"/>
    </location>
</feature>
<name>PLSY_NITWN</name>